<comment type="function">
    <text evidence="1">Regulatory subunit of the poly(A)-nuclease (PAN) deadenylation complex, one of two cytoplasmic mRNA deadenylases involved in mRNA turnover. PAN specifically shortens poly(A) tails of RNA and the activity is stimulated by poly(A)-binding protein PAB1. PAN deadenylation is followed by rapid degradation of the shortened mRNA tails by the CCR4-NOT complex. Deadenylated mRNAs are then degraded by two alternative mechanisms, namely exosome-mediated 3'-5' exonucleolytic degradation, or deadenylation-dependent mRNA decaping and subsequent 5'-3' exonucleolytic degradation by XRN1. May also be involved in post-transcriptional maturation of mRNA poly(A) tails. PAN3 acts as a positive regulator for PAN activity, recruiting the catalytic subunit PAN2 to mRNA via its interaction with RNA and with PAB1.</text>
</comment>
<comment type="subunit">
    <text evidence="1">Homodimer. Forms a heterotrimer with a catalytic subunit PAN2 to form the poly(A)-nuclease (PAN) deadenylation complex. Interacts (via PAM-2 motif) with poly(A)-binding protein PAB1 (via PABC domain), conferring substrate specificity of the enzyme complex.</text>
</comment>
<comment type="subcellular location">
    <subcellularLocation>
        <location evidence="1">Cytoplasm</location>
    </subcellularLocation>
</comment>
<comment type="domain">
    <text evidence="1">The N-terminal zinc finger binds to poly(A) RNA.</text>
</comment>
<comment type="domain">
    <text evidence="1">Contains a pseudokinase domain. The protein kinase domain is predicted to be catalytically inactive because some of the residues important for catalytic activity are substituted and it lacks the equivalent of the binding site for a peptide substrate. However, it has retained an ATP-binding site and ATP-binding is required for mRNA degradation, stimulating the activity of the PAN2 nuclease in vitro. The nucleotide-binding site is juxtaposed to the RNase active site of PAN2 in the complex and may actually bind nucleosides of a poly(A) RNA rather than ATP, feeding the poly(A)-tail to the active site of the deadenylase and thus increasing the efficiency with which this distributive enzyme degrades oligo(A) RNAs.</text>
</comment>
<comment type="domain">
    <text evidence="1">The pseudokinase domain, the coiled-coil (CC), and C-terminal knob domain (CK) form a structural unit (PKC) that forms an extensive high-affinity interaction surface for PAN2.</text>
</comment>
<comment type="similarity">
    <text evidence="1">Belongs to the protein kinase superfamily. PAN3 family.</text>
</comment>
<keyword id="KW-0067">ATP-binding</keyword>
<keyword id="KW-0175">Coiled coil</keyword>
<keyword id="KW-0963">Cytoplasm</keyword>
<keyword id="KW-0479">Metal-binding</keyword>
<keyword id="KW-0507">mRNA processing</keyword>
<keyword id="KW-0547">Nucleotide-binding</keyword>
<keyword id="KW-1185">Reference proteome</keyword>
<keyword id="KW-0862">Zinc</keyword>
<keyword id="KW-0863">Zinc-finger</keyword>
<dbReference type="EMBL" id="CP000496">
    <property type="protein sequence ID" value="ABN64709.2"/>
    <property type="molecule type" value="Genomic_DNA"/>
</dbReference>
<dbReference type="RefSeq" id="XP_001382738.2">
    <property type="nucleotide sequence ID" value="XM_001382701.1"/>
</dbReference>
<dbReference type="SMR" id="A3LQL9"/>
<dbReference type="FunCoup" id="A3LQL9">
    <property type="interactions" value="653"/>
</dbReference>
<dbReference type="STRING" id="322104.A3LQL9"/>
<dbReference type="GeneID" id="4836778"/>
<dbReference type="KEGG" id="pic:PICST_76360"/>
<dbReference type="eggNOG" id="KOG3741">
    <property type="taxonomic scope" value="Eukaryota"/>
</dbReference>
<dbReference type="HOGENOM" id="CLU_016423_1_0_1"/>
<dbReference type="InParanoid" id="A3LQL9"/>
<dbReference type="OMA" id="YVFHSVD"/>
<dbReference type="OrthoDB" id="204958at2759"/>
<dbReference type="Proteomes" id="UP000002258">
    <property type="component" value="Chromosome 2"/>
</dbReference>
<dbReference type="GO" id="GO:0000932">
    <property type="term" value="C:P-body"/>
    <property type="evidence" value="ECO:0007669"/>
    <property type="project" value="TreeGrafter"/>
</dbReference>
<dbReference type="GO" id="GO:0031251">
    <property type="term" value="C:PAN complex"/>
    <property type="evidence" value="ECO:0007669"/>
    <property type="project" value="UniProtKB-UniRule"/>
</dbReference>
<dbReference type="GO" id="GO:0005524">
    <property type="term" value="F:ATP binding"/>
    <property type="evidence" value="ECO:0007669"/>
    <property type="project" value="UniProtKB-UniRule"/>
</dbReference>
<dbReference type="GO" id="GO:0008143">
    <property type="term" value="F:poly(A) binding"/>
    <property type="evidence" value="ECO:0007669"/>
    <property type="project" value="EnsemblFungi"/>
</dbReference>
<dbReference type="GO" id="GO:0008270">
    <property type="term" value="F:zinc ion binding"/>
    <property type="evidence" value="ECO:0007669"/>
    <property type="project" value="UniProtKB-KW"/>
</dbReference>
<dbReference type="GO" id="GO:0006397">
    <property type="term" value="P:mRNA processing"/>
    <property type="evidence" value="ECO:0007669"/>
    <property type="project" value="UniProtKB-KW"/>
</dbReference>
<dbReference type="GO" id="GO:0000289">
    <property type="term" value="P:nuclear-transcribed mRNA poly(A) tail shortening"/>
    <property type="evidence" value="ECO:0007669"/>
    <property type="project" value="UniProtKB-UniRule"/>
</dbReference>
<dbReference type="GO" id="GO:0006301">
    <property type="term" value="P:postreplication repair"/>
    <property type="evidence" value="ECO:0007669"/>
    <property type="project" value="EnsemblFungi"/>
</dbReference>
<dbReference type="Gene3D" id="1.10.287.3700">
    <property type="match status" value="1"/>
</dbReference>
<dbReference type="Gene3D" id="1.20.5.5160">
    <property type="match status" value="1"/>
</dbReference>
<dbReference type="Gene3D" id="6.10.250.3160">
    <property type="match status" value="1"/>
</dbReference>
<dbReference type="Gene3D" id="1.10.510.10">
    <property type="entry name" value="Transferase(Phosphotransferase) domain 1"/>
    <property type="match status" value="1"/>
</dbReference>
<dbReference type="HAMAP" id="MF_03181">
    <property type="entry name" value="PAN3"/>
    <property type="match status" value="1"/>
</dbReference>
<dbReference type="InterPro" id="IPR011009">
    <property type="entry name" value="Kinase-like_dom_sf"/>
</dbReference>
<dbReference type="InterPro" id="IPR030844">
    <property type="entry name" value="PAN3"/>
</dbReference>
<dbReference type="InterPro" id="IPR041332">
    <property type="entry name" value="Pan3_PK"/>
</dbReference>
<dbReference type="InterPro" id="IPR000571">
    <property type="entry name" value="Znf_CCCH"/>
</dbReference>
<dbReference type="PANTHER" id="PTHR12272">
    <property type="entry name" value="DEADENYLATION COMPLEX SUBUNIT PAN3"/>
    <property type="match status" value="1"/>
</dbReference>
<dbReference type="PANTHER" id="PTHR12272:SF11">
    <property type="entry name" value="PAN2-PAN3 DEADENYLATION COMPLEX SUBUNIT PAN3"/>
    <property type="match status" value="1"/>
</dbReference>
<dbReference type="Pfam" id="PF18101">
    <property type="entry name" value="Pan3_PK"/>
    <property type="match status" value="1"/>
</dbReference>
<dbReference type="SUPFAM" id="SSF56112">
    <property type="entry name" value="Protein kinase-like (PK-like)"/>
    <property type="match status" value="1"/>
</dbReference>
<dbReference type="PROSITE" id="PS50103">
    <property type="entry name" value="ZF_C3H1"/>
    <property type="match status" value="1"/>
</dbReference>
<name>PAN3_PICST</name>
<evidence type="ECO:0000255" key="1">
    <source>
        <dbReference type="HAMAP-Rule" id="MF_03181"/>
    </source>
</evidence>
<evidence type="ECO:0000256" key="2">
    <source>
        <dbReference type="SAM" id="MobiDB-lite"/>
    </source>
</evidence>
<gene>
    <name evidence="1" type="primary">PAN3</name>
    <name type="ORF">PICST_76360</name>
</gene>
<feature type="chain" id="PRO_0000295376" description="PAN2-PAN3 deadenylation complex subunit PAN3">
    <location>
        <begin position="1"/>
        <end position="630"/>
    </location>
</feature>
<feature type="zinc finger region" description="C3H1-type" evidence="1">
    <location>
        <begin position="7"/>
        <end position="36"/>
    </location>
</feature>
<feature type="region of interest" description="Disordered" evidence="2">
    <location>
        <begin position="38"/>
        <end position="72"/>
    </location>
</feature>
<feature type="region of interest" description="Disordered" evidence="2">
    <location>
        <begin position="135"/>
        <end position="171"/>
    </location>
</feature>
<feature type="region of interest" description="Pseudokinase domain" evidence="1">
    <location>
        <begin position="231"/>
        <end position="501"/>
    </location>
</feature>
<feature type="region of interest" description="Knob domain" evidence="1">
    <location>
        <begin position="541"/>
        <end position="630"/>
    </location>
</feature>
<feature type="coiled-coil region" evidence="1">
    <location>
        <begin position="502"/>
        <end position="540"/>
    </location>
</feature>
<feature type="compositionally biased region" description="Low complexity" evidence="2">
    <location>
        <begin position="44"/>
        <end position="56"/>
    </location>
</feature>
<feature type="compositionally biased region" description="Polar residues" evidence="2">
    <location>
        <begin position="140"/>
        <end position="149"/>
    </location>
</feature>
<feature type="binding site" evidence="1">
    <location>
        <position position="283"/>
    </location>
    <ligand>
        <name>ATP</name>
        <dbReference type="ChEBI" id="CHEBI:30616"/>
    </ligand>
</feature>
<feature type="binding site" evidence="1">
    <location>
        <begin position="333"/>
        <end position="340"/>
    </location>
    <ligand>
        <name>ATP</name>
        <dbReference type="ChEBI" id="CHEBI:30616"/>
    </ligand>
</feature>
<feature type="binding site" evidence="1">
    <location>
        <begin position="388"/>
        <end position="389"/>
    </location>
    <ligand>
        <name>ATP</name>
        <dbReference type="ChEBI" id="CHEBI:30616"/>
    </ligand>
</feature>
<reference key="1">
    <citation type="journal article" date="2007" name="Nat. Biotechnol.">
        <title>Genome sequence of the lignocellulose-bioconverting and xylose-fermenting yeast Pichia stipitis.</title>
        <authorList>
            <person name="Jeffries T.W."/>
            <person name="Grigoriev I.V."/>
            <person name="Grimwood J."/>
            <person name="Laplaza J.M."/>
            <person name="Aerts A."/>
            <person name="Salamov A."/>
            <person name="Schmutz J."/>
            <person name="Lindquist E."/>
            <person name="Dehal P."/>
            <person name="Shapiro H."/>
            <person name="Jin Y.-S."/>
            <person name="Passoth V."/>
            <person name="Richardson P.M."/>
        </authorList>
    </citation>
    <scope>NUCLEOTIDE SEQUENCE [LARGE SCALE GENOMIC DNA]</scope>
    <source>
        <strain>ATCC 58785 / CBS 6054 / NBRC 10063 / NRRL Y-11545</strain>
    </source>
</reference>
<protein>
    <recommendedName>
        <fullName evidence="1">PAN2-PAN3 deadenylation complex subunit PAN3</fullName>
    </recommendedName>
    <alternativeName>
        <fullName evidence="1">PAB1P-dependent poly(A)-specific ribonuclease</fullName>
    </alternativeName>
    <alternativeName>
        <fullName evidence="1">Poly(A)-nuclease deadenylation complex subunit 3</fullName>
        <shortName evidence="1">PAN deadenylation complex subunit 3</shortName>
    </alternativeName>
</protein>
<sequence length="630" mass="70780">MNLNLDSAKDTLCKNILIYGYCKFENKGCAFSHHKPNVGQPPVSASSSSGYSGNSSPAEAKRKFNLNTPSFQPSNVQNITSKFAALSPKVKEIPVFVPSGGSGGAANTPNNGADANELLSQKKFNASTPSFMPAGFGSEYPSSPNTSGAGQPPNPYLTGNGHPASMAQSSGADVYYQQQAASYPLQYHLYAPAPPPRLTIPLPPHETNANSMFIPNDLRETLQKKNEATLQTLPRSNLPEHINIYHSLVPIDKSYDPKSKVWDVPSSLYKVFSSVDGNPYALRKIELNFPIINEAPFKTIKKWRSVKNANVTQLQEAFTSMAFGKSCLVVVYDYFPNSSTLIDHHKRIGTRTEPITEDLLWNYLVQLVNALMAIHAKGLAARSALDLTKIIVTNKNRIRLSNLAISDILNFEKDEEEISKSNRYFQGLQREDIKKLGRILLSLSTLTIPNTLRNNDTGELLRHLKTSSTISFSDEFIQVLTVLNEDTVEFDLDRFSQRYLTTRLFSTINNLEDSTDFMESQITTELENARLFRLLTKLNFIIDRPEAKDWTENSNKYIIKLFRDYIFFQHDEYGKPVVDLSRVLTNLNKLDAGIDEKFLLVSRDEKNCIIVSYKEIRDTIDSVFRNLTRD</sequence>
<proteinExistence type="inferred from homology"/>
<accession>A3LQL9</accession>
<organism>
    <name type="scientific">Scheffersomyces stipitis (strain ATCC 58785 / CBS 6054 / NBRC 10063 / NRRL Y-11545)</name>
    <name type="common">Yeast</name>
    <name type="synonym">Pichia stipitis</name>
    <dbReference type="NCBI Taxonomy" id="322104"/>
    <lineage>
        <taxon>Eukaryota</taxon>
        <taxon>Fungi</taxon>
        <taxon>Dikarya</taxon>
        <taxon>Ascomycota</taxon>
        <taxon>Saccharomycotina</taxon>
        <taxon>Pichiomycetes</taxon>
        <taxon>Debaryomycetaceae</taxon>
        <taxon>Scheffersomyces</taxon>
    </lineage>
</organism>